<reference key="1">
    <citation type="journal article" date="2006" name="Proc. Natl. Acad. Sci. U.S.A.">
        <title>Evolution of sensory complexity recorded in a myxobacterial genome.</title>
        <authorList>
            <person name="Goldman B.S."/>
            <person name="Nierman W.C."/>
            <person name="Kaiser D."/>
            <person name="Slater S.C."/>
            <person name="Durkin A.S."/>
            <person name="Eisen J.A."/>
            <person name="Ronning C.M."/>
            <person name="Barbazuk W.B."/>
            <person name="Blanchard M."/>
            <person name="Field C."/>
            <person name="Halling C."/>
            <person name="Hinkle G."/>
            <person name="Iartchuk O."/>
            <person name="Kim H.S."/>
            <person name="Mackenzie C."/>
            <person name="Madupu R."/>
            <person name="Miller N."/>
            <person name="Shvartsbeyn A."/>
            <person name="Sullivan S.A."/>
            <person name="Vaudin M."/>
            <person name="Wiegand R."/>
            <person name="Kaplan H.B."/>
        </authorList>
    </citation>
    <scope>NUCLEOTIDE SEQUENCE [LARGE SCALE GENOMIC DNA]</scope>
    <source>
        <strain>DK1622</strain>
    </source>
</reference>
<proteinExistence type="inferred from homology"/>
<accession>Q1CX38</accession>
<dbReference type="EMBL" id="CP000113">
    <property type="protein sequence ID" value="ABF92227.1"/>
    <property type="molecule type" value="Genomic_DNA"/>
</dbReference>
<dbReference type="RefSeq" id="WP_011556841.1">
    <property type="nucleotide sequence ID" value="NC_008095.1"/>
</dbReference>
<dbReference type="SMR" id="Q1CX38"/>
<dbReference type="STRING" id="246197.MXAN_6921"/>
<dbReference type="EnsemblBacteria" id="ABF92227">
    <property type="protein sequence ID" value="ABF92227"/>
    <property type="gene ID" value="MXAN_6921"/>
</dbReference>
<dbReference type="GeneID" id="41364103"/>
<dbReference type="KEGG" id="mxa:MXAN_6921"/>
<dbReference type="eggNOG" id="COG0355">
    <property type="taxonomic scope" value="Bacteria"/>
</dbReference>
<dbReference type="HOGENOM" id="CLU_084338_2_1_7"/>
<dbReference type="OrthoDB" id="9799969at2"/>
<dbReference type="Proteomes" id="UP000002402">
    <property type="component" value="Chromosome"/>
</dbReference>
<dbReference type="GO" id="GO:0005886">
    <property type="term" value="C:plasma membrane"/>
    <property type="evidence" value="ECO:0007669"/>
    <property type="project" value="UniProtKB-SubCell"/>
</dbReference>
<dbReference type="GO" id="GO:0045259">
    <property type="term" value="C:proton-transporting ATP synthase complex"/>
    <property type="evidence" value="ECO:0007669"/>
    <property type="project" value="UniProtKB-KW"/>
</dbReference>
<dbReference type="GO" id="GO:0005524">
    <property type="term" value="F:ATP binding"/>
    <property type="evidence" value="ECO:0007669"/>
    <property type="project" value="UniProtKB-UniRule"/>
</dbReference>
<dbReference type="GO" id="GO:0046933">
    <property type="term" value="F:proton-transporting ATP synthase activity, rotational mechanism"/>
    <property type="evidence" value="ECO:0007669"/>
    <property type="project" value="UniProtKB-UniRule"/>
</dbReference>
<dbReference type="CDD" id="cd12152">
    <property type="entry name" value="F1-ATPase_delta"/>
    <property type="match status" value="1"/>
</dbReference>
<dbReference type="Gene3D" id="2.60.15.10">
    <property type="entry name" value="F0F1 ATP synthase delta/epsilon subunit, N-terminal"/>
    <property type="match status" value="1"/>
</dbReference>
<dbReference type="HAMAP" id="MF_00530">
    <property type="entry name" value="ATP_synth_epsil_bac"/>
    <property type="match status" value="1"/>
</dbReference>
<dbReference type="InterPro" id="IPR001469">
    <property type="entry name" value="ATP_synth_F1_dsu/esu"/>
</dbReference>
<dbReference type="InterPro" id="IPR020546">
    <property type="entry name" value="ATP_synth_F1_dsu/esu_N"/>
</dbReference>
<dbReference type="InterPro" id="IPR036771">
    <property type="entry name" value="ATPsynth_dsu/esu_N"/>
</dbReference>
<dbReference type="NCBIfam" id="TIGR01216">
    <property type="entry name" value="ATP_synt_epsi"/>
    <property type="match status" value="1"/>
</dbReference>
<dbReference type="NCBIfam" id="NF009980">
    <property type="entry name" value="PRK13446.1"/>
    <property type="match status" value="1"/>
</dbReference>
<dbReference type="PANTHER" id="PTHR13822">
    <property type="entry name" value="ATP SYNTHASE DELTA/EPSILON CHAIN"/>
    <property type="match status" value="1"/>
</dbReference>
<dbReference type="PANTHER" id="PTHR13822:SF10">
    <property type="entry name" value="ATP SYNTHASE EPSILON CHAIN, CHLOROPLASTIC"/>
    <property type="match status" value="1"/>
</dbReference>
<dbReference type="Pfam" id="PF02823">
    <property type="entry name" value="ATP-synt_DE_N"/>
    <property type="match status" value="1"/>
</dbReference>
<dbReference type="SUPFAM" id="SSF51344">
    <property type="entry name" value="Epsilon subunit of F1F0-ATP synthase N-terminal domain"/>
    <property type="match status" value="1"/>
</dbReference>
<gene>
    <name evidence="1" type="primary">atpC</name>
    <name type="ordered locus">MXAN_6921</name>
</gene>
<sequence>MAKLTVEIVTPEKRILSVQADEAIVPGGRGLFGVRPGHTPFLSLMEPGALTLIESGRRESYFVAGGFVEVGNDKVLVLADAAEPVTGIDVEGARRRMAEAQERMKGMSSEDARFELEQATVRREAARIGAANTARA</sequence>
<keyword id="KW-0066">ATP synthesis</keyword>
<keyword id="KW-0997">Cell inner membrane</keyword>
<keyword id="KW-1003">Cell membrane</keyword>
<keyword id="KW-0139">CF(1)</keyword>
<keyword id="KW-0375">Hydrogen ion transport</keyword>
<keyword id="KW-0406">Ion transport</keyword>
<keyword id="KW-0472">Membrane</keyword>
<keyword id="KW-1185">Reference proteome</keyword>
<keyword id="KW-0813">Transport</keyword>
<evidence type="ECO:0000255" key="1">
    <source>
        <dbReference type="HAMAP-Rule" id="MF_00530"/>
    </source>
</evidence>
<feature type="chain" id="PRO_0000265843" description="ATP synthase epsilon chain">
    <location>
        <begin position="1"/>
        <end position="136"/>
    </location>
</feature>
<protein>
    <recommendedName>
        <fullName evidence="1">ATP synthase epsilon chain</fullName>
    </recommendedName>
    <alternativeName>
        <fullName evidence="1">ATP synthase F1 sector epsilon subunit</fullName>
    </alternativeName>
    <alternativeName>
        <fullName evidence="1">F-ATPase epsilon subunit</fullName>
    </alternativeName>
</protein>
<name>ATPE_MYXXD</name>
<organism>
    <name type="scientific">Myxococcus xanthus (strain DK1622)</name>
    <dbReference type="NCBI Taxonomy" id="246197"/>
    <lineage>
        <taxon>Bacteria</taxon>
        <taxon>Pseudomonadati</taxon>
        <taxon>Myxococcota</taxon>
        <taxon>Myxococcia</taxon>
        <taxon>Myxococcales</taxon>
        <taxon>Cystobacterineae</taxon>
        <taxon>Myxococcaceae</taxon>
        <taxon>Myxococcus</taxon>
    </lineage>
</organism>
<comment type="function">
    <text evidence="1">Produces ATP from ADP in the presence of a proton gradient across the membrane.</text>
</comment>
<comment type="subunit">
    <text>F-type ATPases have 2 components, CF(1) - the catalytic core - and CF(0) - the membrane proton channel. CF(1) has five subunits: alpha(3), beta(3), gamma(1), delta(1), epsilon(1). CF(0) has three main subunits: a, b and c.</text>
</comment>
<comment type="subcellular location">
    <subcellularLocation>
        <location evidence="1">Cell inner membrane</location>
        <topology evidence="1">Peripheral membrane protein</topology>
    </subcellularLocation>
</comment>
<comment type="similarity">
    <text evidence="1">Belongs to the ATPase epsilon chain family.</text>
</comment>